<protein>
    <recommendedName>
        <fullName evidence="1">Photosystem I assembly protein Ycf3</fullName>
    </recommendedName>
</protein>
<sequence>MPRTQRNDNFIDKSFTVMADIILKILPTNQKAKEAFVYYRDGMSAQADGEYAEALDNYEEALRLEENPNDRSYILYNMALIHASNGDHEKALGLYQEAIELNPKMPSALNNIAVIYHFQGEKAKEAGQEDDAENLFDKAAEYWKQAIRLAPNNYIEAQNWLKITGRSEMDVFF</sequence>
<gene>
    <name evidence="1" type="primary">ycf3</name>
    <name type="ordered locus">slr0823</name>
</gene>
<proteinExistence type="inferred from homology"/>
<organism>
    <name type="scientific">Synechocystis sp. (strain ATCC 27184 / PCC 6803 / Kazusa)</name>
    <dbReference type="NCBI Taxonomy" id="1111708"/>
    <lineage>
        <taxon>Bacteria</taxon>
        <taxon>Bacillati</taxon>
        <taxon>Cyanobacteriota</taxon>
        <taxon>Cyanophyceae</taxon>
        <taxon>Synechococcales</taxon>
        <taxon>Merismopediaceae</taxon>
        <taxon>Synechocystis</taxon>
    </lineage>
</organism>
<name>YCF3_SYNY3</name>
<accession>P74063</accession>
<comment type="function">
    <text evidence="1">Essential for the assembly of the photosystem I (PSI) complex. May act as a chaperone-like factor to guide the assembly of the PSI subunits.</text>
</comment>
<comment type="subcellular location">
    <subcellularLocation>
        <location evidence="1">Cellular thylakoid membrane</location>
        <topology evidence="1">Peripheral membrane protein</topology>
    </subcellularLocation>
</comment>
<comment type="similarity">
    <text evidence="1">Belongs to the Ycf3 family.</text>
</comment>
<dbReference type="EMBL" id="BA000022">
    <property type="protein sequence ID" value="BAA18139.1"/>
    <property type="molecule type" value="Genomic_DNA"/>
</dbReference>
<dbReference type="PIR" id="S75578">
    <property type="entry name" value="S75578"/>
</dbReference>
<dbReference type="SMR" id="P74063"/>
<dbReference type="IntAct" id="P74063">
    <property type="interactions" value="1"/>
</dbReference>
<dbReference type="STRING" id="1148.gene:10499011"/>
<dbReference type="PaxDb" id="1148-1653223"/>
<dbReference type="EnsemblBacteria" id="BAA18139">
    <property type="protein sequence ID" value="BAA18139"/>
    <property type="gene ID" value="BAA18139"/>
</dbReference>
<dbReference type="KEGG" id="syn:slr0823"/>
<dbReference type="eggNOG" id="COG0457">
    <property type="taxonomic scope" value="Bacteria"/>
</dbReference>
<dbReference type="InParanoid" id="P74063"/>
<dbReference type="PhylomeDB" id="P74063"/>
<dbReference type="Proteomes" id="UP000001425">
    <property type="component" value="Chromosome"/>
</dbReference>
<dbReference type="GO" id="GO:0031676">
    <property type="term" value="C:plasma membrane-derived thylakoid membrane"/>
    <property type="evidence" value="ECO:0007669"/>
    <property type="project" value="UniProtKB-SubCell"/>
</dbReference>
<dbReference type="GO" id="GO:0015979">
    <property type="term" value="P:photosynthesis"/>
    <property type="evidence" value="ECO:0007669"/>
    <property type="project" value="UniProtKB-UniRule"/>
</dbReference>
<dbReference type="Gene3D" id="1.25.40.10">
    <property type="entry name" value="Tetratricopeptide repeat domain"/>
    <property type="match status" value="1"/>
</dbReference>
<dbReference type="HAMAP" id="MF_00439">
    <property type="entry name" value="Ycf3"/>
    <property type="match status" value="1"/>
</dbReference>
<dbReference type="InterPro" id="IPR022818">
    <property type="entry name" value="PSI_Ycf3_assembly"/>
</dbReference>
<dbReference type="InterPro" id="IPR011990">
    <property type="entry name" value="TPR-like_helical_dom_sf"/>
</dbReference>
<dbReference type="InterPro" id="IPR019734">
    <property type="entry name" value="TPR_rpt"/>
</dbReference>
<dbReference type="InterPro" id="IPR051685">
    <property type="entry name" value="Ycf3/AcsC/BcsC/TPR_MFPF"/>
</dbReference>
<dbReference type="NCBIfam" id="NF002725">
    <property type="entry name" value="PRK02603.1"/>
    <property type="match status" value="1"/>
</dbReference>
<dbReference type="PANTHER" id="PTHR44943">
    <property type="entry name" value="CELLULOSE SYNTHASE OPERON PROTEIN C"/>
    <property type="match status" value="1"/>
</dbReference>
<dbReference type="PANTHER" id="PTHR44943:SF8">
    <property type="entry name" value="TPR REPEAT-CONTAINING PROTEIN MJ0263"/>
    <property type="match status" value="1"/>
</dbReference>
<dbReference type="Pfam" id="PF13424">
    <property type="entry name" value="TPR_12"/>
    <property type="match status" value="1"/>
</dbReference>
<dbReference type="SMART" id="SM00028">
    <property type="entry name" value="TPR"/>
    <property type="match status" value="3"/>
</dbReference>
<dbReference type="SUPFAM" id="SSF48452">
    <property type="entry name" value="TPR-like"/>
    <property type="match status" value="1"/>
</dbReference>
<dbReference type="PROSITE" id="PS50005">
    <property type="entry name" value="TPR"/>
    <property type="match status" value="3"/>
</dbReference>
<dbReference type="PROSITE" id="PS50293">
    <property type="entry name" value="TPR_REGION"/>
    <property type="match status" value="1"/>
</dbReference>
<reference key="1">
    <citation type="journal article" date="1996" name="DNA Res.">
        <title>Sequence analysis of the genome of the unicellular cyanobacterium Synechocystis sp. strain PCC6803. II. Sequence determination of the entire genome and assignment of potential protein-coding regions.</title>
        <authorList>
            <person name="Kaneko T."/>
            <person name="Sato S."/>
            <person name="Kotani H."/>
            <person name="Tanaka A."/>
            <person name="Asamizu E."/>
            <person name="Nakamura Y."/>
            <person name="Miyajima N."/>
            <person name="Hirosawa M."/>
            <person name="Sugiura M."/>
            <person name="Sasamoto S."/>
            <person name="Kimura T."/>
            <person name="Hosouchi T."/>
            <person name="Matsuno A."/>
            <person name="Muraki A."/>
            <person name="Nakazaki N."/>
            <person name="Naruo K."/>
            <person name="Okumura S."/>
            <person name="Shimpo S."/>
            <person name="Takeuchi C."/>
            <person name="Wada T."/>
            <person name="Watanabe A."/>
            <person name="Yamada M."/>
            <person name="Yasuda M."/>
            <person name="Tabata S."/>
        </authorList>
    </citation>
    <scope>NUCLEOTIDE SEQUENCE [LARGE SCALE GENOMIC DNA]</scope>
    <source>
        <strain>ATCC 27184 / PCC 6803 / Kazusa</strain>
    </source>
</reference>
<evidence type="ECO:0000255" key="1">
    <source>
        <dbReference type="HAMAP-Rule" id="MF_00439"/>
    </source>
</evidence>
<keyword id="KW-0472">Membrane</keyword>
<keyword id="KW-0602">Photosynthesis</keyword>
<keyword id="KW-1185">Reference proteome</keyword>
<keyword id="KW-0677">Repeat</keyword>
<keyword id="KW-0793">Thylakoid</keyword>
<keyword id="KW-0802">TPR repeat</keyword>
<feature type="chain" id="PRO_0000217834" description="Photosystem I assembly protein Ycf3">
    <location>
        <begin position="1"/>
        <end position="173"/>
    </location>
</feature>
<feature type="repeat" description="TPR 1">
    <location>
        <begin position="35"/>
        <end position="68"/>
    </location>
</feature>
<feature type="repeat" description="TPR 2">
    <location>
        <begin position="72"/>
        <end position="105"/>
    </location>
</feature>
<feature type="repeat" description="TPR 3">
    <location>
        <begin position="120"/>
        <end position="153"/>
    </location>
</feature>